<dbReference type="EC" id="6.3.4.3" evidence="1"/>
<dbReference type="EMBL" id="CP001074">
    <property type="protein sequence ID" value="ACE92184.1"/>
    <property type="molecule type" value="Genomic_DNA"/>
</dbReference>
<dbReference type="SMR" id="B3PV59"/>
<dbReference type="KEGG" id="rec:RHECIAT_CH0003236"/>
<dbReference type="eggNOG" id="COG2759">
    <property type="taxonomic scope" value="Bacteria"/>
</dbReference>
<dbReference type="HOGENOM" id="CLU_003601_3_3_5"/>
<dbReference type="UniPathway" id="UPA00193"/>
<dbReference type="Proteomes" id="UP000008817">
    <property type="component" value="Chromosome"/>
</dbReference>
<dbReference type="GO" id="GO:0005524">
    <property type="term" value="F:ATP binding"/>
    <property type="evidence" value="ECO:0007669"/>
    <property type="project" value="UniProtKB-UniRule"/>
</dbReference>
<dbReference type="GO" id="GO:0004329">
    <property type="term" value="F:formate-tetrahydrofolate ligase activity"/>
    <property type="evidence" value="ECO:0007669"/>
    <property type="project" value="UniProtKB-UniRule"/>
</dbReference>
<dbReference type="GO" id="GO:0035999">
    <property type="term" value="P:tetrahydrofolate interconversion"/>
    <property type="evidence" value="ECO:0007669"/>
    <property type="project" value="UniProtKB-UniRule"/>
</dbReference>
<dbReference type="CDD" id="cd00477">
    <property type="entry name" value="FTHFS"/>
    <property type="match status" value="1"/>
</dbReference>
<dbReference type="FunFam" id="3.30.1510.10:FF:000001">
    <property type="entry name" value="Formate--tetrahydrofolate ligase"/>
    <property type="match status" value="1"/>
</dbReference>
<dbReference type="FunFam" id="3.10.410.10:FF:000001">
    <property type="entry name" value="Putative formate--tetrahydrofolate ligase"/>
    <property type="match status" value="1"/>
</dbReference>
<dbReference type="Gene3D" id="3.30.1510.10">
    <property type="entry name" value="Domain 2, N(10)-formyltetrahydrofolate synthetase"/>
    <property type="match status" value="1"/>
</dbReference>
<dbReference type="Gene3D" id="3.10.410.10">
    <property type="entry name" value="Formyltetrahydrofolate synthetase, domain 3"/>
    <property type="match status" value="1"/>
</dbReference>
<dbReference type="Gene3D" id="3.40.50.300">
    <property type="entry name" value="P-loop containing nucleotide triphosphate hydrolases"/>
    <property type="match status" value="1"/>
</dbReference>
<dbReference type="HAMAP" id="MF_01543">
    <property type="entry name" value="FTHFS"/>
    <property type="match status" value="1"/>
</dbReference>
<dbReference type="InterPro" id="IPR000559">
    <property type="entry name" value="Formate_THF_ligase"/>
</dbReference>
<dbReference type="InterPro" id="IPR020628">
    <property type="entry name" value="Formate_THF_ligase_CS"/>
</dbReference>
<dbReference type="InterPro" id="IPR027417">
    <property type="entry name" value="P-loop_NTPase"/>
</dbReference>
<dbReference type="NCBIfam" id="NF010030">
    <property type="entry name" value="PRK13505.1"/>
    <property type="match status" value="1"/>
</dbReference>
<dbReference type="Pfam" id="PF01268">
    <property type="entry name" value="FTHFS"/>
    <property type="match status" value="1"/>
</dbReference>
<dbReference type="SUPFAM" id="SSF52540">
    <property type="entry name" value="P-loop containing nucleoside triphosphate hydrolases"/>
    <property type="match status" value="1"/>
</dbReference>
<dbReference type="PROSITE" id="PS00721">
    <property type="entry name" value="FTHFS_1"/>
    <property type="match status" value="1"/>
</dbReference>
<dbReference type="PROSITE" id="PS00722">
    <property type="entry name" value="FTHFS_2"/>
    <property type="match status" value="1"/>
</dbReference>
<sequence>MPSIKSDIEIARAAAKKPIFEIGAQLGIPVEQLAPYGHDKAKVSAEFIAAQAGRKDGKLILVTAINPTPAGEGKTTTTVGLGDGLNRIGKKAIICIREASLGPCFGVKGGAAGGGYAQVVPMEDINLHFTGDFHAITSAHNLLAAMIDNHIYWGNEENIDIRRIAWRRVMDMNDRALRSMVSSLGGVANGFPRQGGFDITVASEVMAILCLATDLKDLERRLGDIIIGYRFDKTPVHARDLKADGAMAVLLKDAMQPNLVQTLENNPAFVHGGPFANIAHGCNSVTATKTALKLGDYVVTEAGFGADLGAEKFFDIKCRKAGLRPDAAVIVATVRALKMNGGVKKEDLGTEDVAALKKGCANLGRHVANVRRFGVPVVVAINHFVSDTDAEIAAVKEFVSRLGAEAILCQHWAKGSAGIEELAHKVVELAESGQAKFHPLYGDDLSLFEKIEIIASKIYHAGEVTADKAVRDQLQSWEEQGYGKLPVCMAKTQYSFSTDPNLRGAPEGHIVSVREVRLSAGAGFVVAITGEIMTMPGLPKSPSAERIFLNDQGYIEGLF</sequence>
<organism>
    <name type="scientific">Rhizobium etli (strain CIAT 652)</name>
    <dbReference type="NCBI Taxonomy" id="491916"/>
    <lineage>
        <taxon>Bacteria</taxon>
        <taxon>Pseudomonadati</taxon>
        <taxon>Pseudomonadota</taxon>
        <taxon>Alphaproteobacteria</taxon>
        <taxon>Hyphomicrobiales</taxon>
        <taxon>Rhizobiaceae</taxon>
        <taxon>Rhizobium/Agrobacterium group</taxon>
        <taxon>Rhizobium</taxon>
    </lineage>
</organism>
<accession>B3PV59</accession>
<comment type="catalytic activity">
    <reaction evidence="1">
        <text>(6S)-5,6,7,8-tetrahydrofolate + formate + ATP = (6R)-10-formyltetrahydrofolate + ADP + phosphate</text>
        <dbReference type="Rhea" id="RHEA:20221"/>
        <dbReference type="ChEBI" id="CHEBI:15740"/>
        <dbReference type="ChEBI" id="CHEBI:30616"/>
        <dbReference type="ChEBI" id="CHEBI:43474"/>
        <dbReference type="ChEBI" id="CHEBI:57453"/>
        <dbReference type="ChEBI" id="CHEBI:195366"/>
        <dbReference type="ChEBI" id="CHEBI:456216"/>
        <dbReference type="EC" id="6.3.4.3"/>
    </reaction>
</comment>
<comment type="pathway">
    <text evidence="1">One-carbon metabolism; tetrahydrofolate interconversion.</text>
</comment>
<comment type="similarity">
    <text evidence="1">Belongs to the formate--tetrahydrofolate ligase family.</text>
</comment>
<feature type="chain" id="PRO_1000196821" description="Formate--tetrahydrofolate ligase">
    <location>
        <begin position="1"/>
        <end position="559"/>
    </location>
</feature>
<feature type="binding site" evidence="1">
    <location>
        <begin position="68"/>
        <end position="75"/>
    </location>
    <ligand>
        <name>ATP</name>
        <dbReference type="ChEBI" id="CHEBI:30616"/>
    </ligand>
</feature>
<keyword id="KW-0067">ATP-binding</keyword>
<keyword id="KW-0436">Ligase</keyword>
<keyword id="KW-0547">Nucleotide-binding</keyword>
<keyword id="KW-0554">One-carbon metabolism</keyword>
<name>FTHS_RHIE6</name>
<proteinExistence type="inferred from homology"/>
<protein>
    <recommendedName>
        <fullName evidence="1">Formate--tetrahydrofolate ligase</fullName>
        <ecNumber evidence="1">6.3.4.3</ecNumber>
    </recommendedName>
    <alternativeName>
        <fullName evidence="1">Formyltetrahydrofolate synthetase</fullName>
        <shortName evidence="1">FHS</shortName>
        <shortName evidence="1">FTHFS</shortName>
    </alternativeName>
</protein>
<evidence type="ECO:0000255" key="1">
    <source>
        <dbReference type="HAMAP-Rule" id="MF_01543"/>
    </source>
</evidence>
<reference key="1">
    <citation type="journal article" date="2010" name="Appl. Environ. Microbiol.">
        <title>Conserved symbiotic plasmid DNA sequences in the multireplicon pangenomic structure of Rhizobium etli.</title>
        <authorList>
            <person name="Gonzalez V."/>
            <person name="Acosta J.L."/>
            <person name="Santamaria R.I."/>
            <person name="Bustos P."/>
            <person name="Fernandez J.L."/>
            <person name="Hernandez Gonzalez I.L."/>
            <person name="Diaz R."/>
            <person name="Flores M."/>
            <person name="Palacios R."/>
            <person name="Mora J."/>
            <person name="Davila G."/>
        </authorList>
    </citation>
    <scope>NUCLEOTIDE SEQUENCE [LARGE SCALE GENOMIC DNA]</scope>
    <source>
        <strain>CIAT 652</strain>
    </source>
</reference>
<gene>
    <name evidence="1" type="primary">fhs</name>
    <name type="ordered locus">RHECIAT_CH0003236</name>
</gene>